<gene>
    <name evidence="1" type="primary">alaS</name>
    <name type="ordered locus">Rmet_0831</name>
</gene>
<protein>
    <recommendedName>
        <fullName evidence="1">Alanine--tRNA ligase</fullName>
        <ecNumber evidence="1">6.1.1.7</ecNumber>
    </recommendedName>
    <alternativeName>
        <fullName evidence="1">Alanyl-tRNA synthetase</fullName>
        <shortName evidence="1">AlaRS</shortName>
    </alternativeName>
</protein>
<sequence length="874" mass="94706">MKVSDIRSKFLQFFESKGHTVVRSSSLVPANDPTLLFTNSGMVQFKDVFLGTDKRPYVRATSSQRSVRAGGKHNDLENVGYTARHHTFFEMLGNFSFGDYFKREAIQYAWELLTKVYQLPADKLWVTVYAEDDEAYDIWAKEVGVPADRIVRIGDNKGARYASDNFWQMADTGPCGPCSEIFYDHGPDVWGGPPGSPEEDGDRYIEIWNLVFMQFNRDEQGTMTPLPKPCVDTGMGLERIAAVLQHVHSNYEIDLFQALIKGAGRETHIADLNQNSLKVIADHIRACSFLIVDGVIPGNEGRGYVLRRIVRRAIRHGYKLGQKTPFFHKLVGDLVAQMGEAYPELAEAQSRVVEVLKAEEERFFETIENGMSILDAAVADLKAKGGKVLDGELAFKLHDTFGFPLDLTQDVAREQEITVDEAAFDAAMTRQREQARAAGKFKMAAGLEYSGEKTVFHGYDALSMDGVRVTALYVDGASVDTMQPGQSGVVVLDNTPFYAESGGQVGDQGTLVSGPAVFAVADTTKIQSDVFGHQGTLANGALKVGDTVAAQVDAVRRARTVRNHSATHLMHKALREVLGTHVQQKGSLVDPDKTRFDFSHNAPLTDAQIRQIEEIVNAEILSNAPTVAQVMPFDDAVKSGAMALFGEKYADDVRVLSIGTSKELCGGTHVTRTGDIGLFKIVVEAGVAAGIRRVEAITGDNALHYLQSLDARLNEAAAALRAQPSELVPRIGQVQDQVRALEKELEKLKSKLASSQGDELAAQAVDVKGLKVLAAQLDGADVKTLRETMDKLKDKLQSAAIVLAAVADGKVSLIAGVTADATSKVKAGELVNFVAQQVGGKGGGRPDMAQAGGTDPANLPKALAGVTEWVSAKV</sequence>
<keyword id="KW-0030">Aminoacyl-tRNA synthetase</keyword>
<keyword id="KW-0067">ATP-binding</keyword>
<keyword id="KW-0963">Cytoplasm</keyword>
<keyword id="KW-0436">Ligase</keyword>
<keyword id="KW-0479">Metal-binding</keyword>
<keyword id="KW-0547">Nucleotide-binding</keyword>
<keyword id="KW-0648">Protein biosynthesis</keyword>
<keyword id="KW-1185">Reference proteome</keyword>
<keyword id="KW-0694">RNA-binding</keyword>
<keyword id="KW-0820">tRNA-binding</keyword>
<keyword id="KW-0862">Zinc</keyword>
<comment type="function">
    <text evidence="1">Catalyzes the attachment of alanine to tRNA(Ala) in a two-step reaction: alanine is first activated by ATP to form Ala-AMP and then transferred to the acceptor end of tRNA(Ala). Also edits incorrectly charged Ser-tRNA(Ala) and Gly-tRNA(Ala) via its editing domain.</text>
</comment>
<comment type="catalytic activity">
    <reaction evidence="1">
        <text>tRNA(Ala) + L-alanine + ATP = L-alanyl-tRNA(Ala) + AMP + diphosphate</text>
        <dbReference type="Rhea" id="RHEA:12540"/>
        <dbReference type="Rhea" id="RHEA-COMP:9657"/>
        <dbReference type="Rhea" id="RHEA-COMP:9923"/>
        <dbReference type="ChEBI" id="CHEBI:30616"/>
        <dbReference type="ChEBI" id="CHEBI:33019"/>
        <dbReference type="ChEBI" id="CHEBI:57972"/>
        <dbReference type="ChEBI" id="CHEBI:78442"/>
        <dbReference type="ChEBI" id="CHEBI:78497"/>
        <dbReference type="ChEBI" id="CHEBI:456215"/>
        <dbReference type="EC" id="6.1.1.7"/>
    </reaction>
</comment>
<comment type="cofactor">
    <cofactor evidence="1">
        <name>Zn(2+)</name>
        <dbReference type="ChEBI" id="CHEBI:29105"/>
    </cofactor>
    <text evidence="1">Binds 1 zinc ion per subunit.</text>
</comment>
<comment type="subcellular location">
    <subcellularLocation>
        <location evidence="1">Cytoplasm</location>
    </subcellularLocation>
</comment>
<comment type="domain">
    <text evidence="1">Consists of three domains; the N-terminal catalytic domain, the editing domain and the C-terminal C-Ala domain. The editing domain removes incorrectly charged amino acids, while the C-Ala domain, along with tRNA(Ala), serves as a bridge to cooperatively bring together the editing and aminoacylation centers thus stimulating deacylation of misacylated tRNAs.</text>
</comment>
<comment type="similarity">
    <text evidence="1">Belongs to the class-II aminoacyl-tRNA synthetase family.</text>
</comment>
<comment type="sequence caution" evidence="2">
    <conflict type="erroneous initiation">
        <sequence resource="EMBL-CDS" id="ABF07717"/>
    </conflict>
</comment>
<name>SYA_CUPMC</name>
<organism>
    <name type="scientific">Cupriavidus metallidurans (strain ATCC 43123 / DSM 2839 / NBRC 102507 / CH34)</name>
    <name type="common">Ralstonia metallidurans</name>
    <dbReference type="NCBI Taxonomy" id="266264"/>
    <lineage>
        <taxon>Bacteria</taxon>
        <taxon>Pseudomonadati</taxon>
        <taxon>Pseudomonadota</taxon>
        <taxon>Betaproteobacteria</taxon>
        <taxon>Burkholderiales</taxon>
        <taxon>Burkholderiaceae</taxon>
        <taxon>Cupriavidus</taxon>
    </lineage>
</organism>
<dbReference type="EC" id="6.1.1.7" evidence="1"/>
<dbReference type="EMBL" id="CP000352">
    <property type="protein sequence ID" value="ABF07717.1"/>
    <property type="status" value="ALT_INIT"/>
    <property type="molecule type" value="Genomic_DNA"/>
</dbReference>
<dbReference type="RefSeq" id="WP_029308285.1">
    <property type="nucleotide sequence ID" value="NC_007973.1"/>
</dbReference>
<dbReference type="SMR" id="Q1LQ59"/>
<dbReference type="STRING" id="266264.Rmet_0831"/>
<dbReference type="KEGG" id="rme:Rmet_0831"/>
<dbReference type="eggNOG" id="COG0013">
    <property type="taxonomic scope" value="Bacteria"/>
</dbReference>
<dbReference type="HOGENOM" id="CLU_004485_1_1_4"/>
<dbReference type="Proteomes" id="UP000002429">
    <property type="component" value="Chromosome"/>
</dbReference>
<dbReference type="GO" id="GO:0005829">
    <property type="term" value="C:cytosol"/>
    <property type="evidence" value="ECO:0007669"/>
    <property type="project" value="TreeGrafter"/>
</dbReference>
<dbReference type="GO" id="GO:0004813">
    <property type="term" value="F:alanine-tRNA ligase activity"/>
    <property type="evidence" value="ECO:0007669"/>
    <property type="project" value="UniProtKB-UniRule"/>
</dbReference>
<dbReference type="GO" id="GO:0002161">
    <property type="term" value="F:aminoacyl-tRNA deacylase activity"/>
    <property type="evidence" value="ECO:0007669"/>
    <property type="project" value="TreeGrafter"/>
</dbReference>
<dbReference type="GO" id="GO:0005524">
    <property type="term" value="F:ATP binding"/>
    <property type="evidence" value="ECO:0007669"/>
    <property type="project" value="UniProtKB-UniRule"/>
</dbReference>
<dbReference type="GO" id="GO:0000049">
    <property type="term" value="F:tRNA binding"/>
    <property type="evidence" value="ECO:0007669"/>
    <property type="project" value="UniProtKB-KW"/>
</dbReference>
<dbReference type="GO" id="GO:0008270">
    <property type="term" value="F:zinc ion binding"/>
    <property type="evidence" value="ECO:0007669"/>
    <property type="project" value="UniProtKB-UniRule"/>
</dbReference>
<dbReference type="GO" id="GO:0006419">
    <property type="term" value="P:alanyl-tRNA aminoacylation"/>
    <property type="evidence" value="ECO:0007669"/>
    <property type="project" value="UniProtKB-UniRule"/>
</dbReference>
<dbReference type="GO" id="GO:0045892">
    <property type="term" value="P:negative regulation of DNA-templated transcription"/>
    <property type="evidence" value="ECO:0007669"/>
    <property type="project" value="TreeGrafter"/>
</dbReference>
<dbReference type="CDD" id="cd00673">
    <property type="entry name" value="AlaRS_core"/>
    <property type="match status" value="1"/>
</dbReference>
<dbReference type="FunFam" id="2.40.30.130:FF:000001">
    <property type="entry name" value="Alanine--tRNA ligase"/>
    <property type="match status" value="1"/>
</dbReference>
<dbReference type="FunFam" id="3.10.310.40:FF:000001">
    <property type="entry name" value="Alanine--tRNA ligase"/>
    <property type="match status" value="1"/>
</dbReference>
<dbReference type="FunFam" id="3.30.54.20:FF:000001">
    <property type="entry name" value="Alanine--tRNA ligase"/>
    <property type="match status" value="1"/>
</dbReference>
<dbReference type="FunFam" id="3.30.930.10:FF:000004">
    <property type="entry name" value="Alanine--tRNA ligase"/>
    <property type="match status" value="1"/>
</dbReference>
<dbReference type="FunFam" id="3.30.980.10:FF:000004">
    <property type="entry name" value="Alanine--tRNA ligase, cytoplasmic"/>
    <property type="match status" value="1"/>
</dbReference>
<dbReference type="Gene3D" id="2.40.30.130">
    <property type="match status" value="1"/>
</dbReference>
<dbReference type="Gene3D" id="3.10.310.40">
    <property type="match status" value="1"/>
</dbReference>
<dbReference type="Gene3D" id="3.30.54.20">
    <property type="match status" value="1"/>
</dbReference>
<dbReference type="Gene3D" id="6.10.250.550">
    <property type="match status" value="1"/>
</dbReference>
<dbReference type="Gene3D" id="3.30.930.10">
    <property type="entry name" value="Bira Bifunctional Protein, Domain 2"/>
    <property type="match status" value="1"/>
</dbReference>
<dbReference type="Gene3D" id="3.30.980.10">
    <property type="entry name" value="Threonyl-trna Synthetase, Chain A, domain 2"/>
    <property type="match status" value="1"/>
</dbReference>
<dbReference type="HAMAP" id="MF_00036_B">
    <property type="entry name" value="Ala_tRNA_synth_B"/>
    <property type="match status" value="1"/>
</dbReference>
<dbReference type="InterPro" id="IPR045864">
    <property type="entry name" value="aa-tRNA-synth_II/BPL/LPL"/>
</dbReference>
<dbReference type="InterPro" id="IPR002318">
    <property type="entry name" value="Ala-tRNA-lgiase_IIc"/>
</dbReference>
<dbReference type="InterPro" id="IPR018162">
    <property type="entry name" value="Ala-tRNA-ligase_IIc_anticod-bd"/>
</dbReference>
<dbReference type="InterPro" id="IPR018165">
    <property type="entry name" value="Ala-tRNA-synth_IIc_core"/>
</dbReference>
<dbReference type="InterPro" id="IPR018164">
    <property type="entry name" value="Ala-tRNA-synth_IIc_N"/>
</dbReference>
<dbReference type="InterPro" id="IPR050058">
    <property type="entry name" value="Ala-tRNA_ligase"/>
</dbReference>
<dbReference type="InterPro" id="IPR023033">
    <property type="entry name" value="Ala_tRNA_ligase_euk/bac"/>
</dbReference>
<dbReference type="InterPro" id="IPR003156">
    <property type="entry name" value="DHHA1_dom"/>
</dbReference>
<dbReference type="InterPro" id="IPR018163">
    <property type="entry name" value="Thr/Ala-tRNA-synth_IIc_edit"/>
</dbReference>
<dbReference type="InterPro" id="IPR009000">
    <property type="entry name" value="Transl_B-barrel_sf"/>
</dbReference>
<dbReference type="InterPro" id="IPR012947">
    <property type="entry name" value="tRNA_SAD"/>
</dbReference>
<dbReference type="NCBIfam" id="TIGR00344">
    <property type="entry name" value="alaS"/>
    <property type="match status" value="1"/>
</dbReference>
<dbReference type="PANTHER" id="PTHR11777:SF9">
    <property type="entry name" value="ALANINE--TRNA LIGASE, CYTOPLASMIC"/>
    <property type="match status" value="1"/>
</dbReference>
<dbReference type="PANTHER" id="PTHR11777">
    <property type="entry name" value="ALANYL-TRNA SYNTHETASE"/>
    <property type="match status" value="1"/>
</dbReference>
<dbReference type="Pfam" id="PF02272">
    <property type="entry name" value="DHHA1"/>
    <property type="match status" value="1"/>
</dbReference>
<dbReference type="Pfam" id="PF01411">
    <property type="entry name" value="tRNA-synt_2c"/>
    <property type="match status" value="1"/>
</dbReference>
<dbReference type="Pfam" id="PF07973">
    <property type="entry name" value="tRNA_SAD"/>
    <property type="match status" value="1"/>
</dbReference>
<dbReference type="PRINTS" id="PR00980">
    <property type="entry name" value="TRNASYNTHALA"/>
</dbReference>
<dbReference type="SMART" id="SM00863">
    <property type="entry name" value="tRNA_SAD"/>
    <property type="match status" value="1"/>
</dbReference>
<dbReference type="SUPFAM" id="SSF55681">
    <property type="entry name" value="Class II aaRS and biotin synthetases"/>
    <property type="match status" value="1"/>
</dbReference>
<dbReference type="SUPFAM" id="SSF101353">
    <property type="entry name" value="Putative anticodon-binding domain of alanyl-tRNA synthetase (AlaRS)"/>
    <property type="match status" value="1"/>
</dbReference>
<dbReference type="SUPFAM" id="SSF55186">
    <property type="entry name" value="ThrRS/AlaRS common domain"/>
    <property type="match status" value="1"/>
</dbReference>
<dbReference type="SUPFAM" id="SSF50447">
    <property type="entry name" value="Translation proteins"/>
    <property type="match status" value="1"/>
</dbReference>
<dbReference type="PROSITE" id="PS50860">
    <property type="entry name" value="AA_TRNA_LIGASE_II_ALA"/>
    <property type="match status" value="1"/>
</dbReference>
<feature type="chain" id="PRO_0000347748" description="Alanine--tRNA ligase">
    <location>
        <begin position="1"/>
        <end position="874"/>
    </location>
</feature>
<feature type="binding site" evidence="1">
    <location>
        <position position="564"/>
    </location>
    <ligand>
        <name>Zn(2+)</name>
        <dbReference type="ChEBI" id="CHEBI:29105"/>
    </ligand>
</feature>
<feature type="binding site" evidence="1">
    <location>
        <position position="568"/>
    </location>
    <ligand>
        <name>Zn(2+)</name>
        <dbReference type="ChEBI" id="CHEBI:29105"/>
    </ligand>
</feature>
<feature type="binding site" evidence="1">
    <location>
        <position position="665"/>
    </location>
    <ligand>
        <name>Zn(2+)</name>
        <dbReference type="ChEBI" id="CHEBI:29105"/>
    </ligand>
</feature>
<feature type="binding site" evidence="1">
    <location>
        <position position="669"/>
    </location>
    <ligand>
        <name>Zn(2+)</name>
        <dbReference type="ChEBI" id="CHEBI:29105"/>
    </ligand>
</feature>
<reference key="1">
    <citation type="journal article" date="2010" name="PLoS ONE">
        <title>The complete genome sequence of Cupriavidus metallidurans strain CH34, a master survivalist in harsh and anthropogenic environments.</title>
        <authorList>
            <person name="Janssen P.J."/>
            <person name="Van Houdt R."/>
            <person name="Moors H."/>
            <person name="Monsieurs P."/>
            <person name="Morin N."/>
            <person name="Michaux A."/>
            <person name="Benotmane M.A."/>
            <person name="Leys N."/>
            <person name="Vallaeys T."/>
            <person name="Lapidus A."/>
            <person name="Monchy S."/>
            <person name="Medigue C."/>
            <person name="Taghavi S."/>
            <person name="McCorkle S."/>
            <person name="Dunn J."/>
            <person name="van der Lelie D."/>
            <person name="Mergeay M."/>
        </authorList>
    </citation>
    <scope>NUCLEOTIDE SEQUENCE [LARGE SCALE GENOMIC DNA]</scope>
    <source>
        <strain>ATCC 43123 / DSM 2839 / NBRC 102507 / CH34</strain>
    </source>
</reference>
<accession>Q1LQ59</accession>
<proteinExistence type="inferred from homology"/>
<evidence type="ECO:0000255" key="1">
    <source>
        <dbReference type="HAMAP-Rule" id="MF_00036"/>
    </source>
</evidence>
<evidence type="ECO:0000305" key="2"/>